<proteinExistence type="evidence at protein level"/>
<feature type="chain" id="PRO_0000455267" description="N-(5-amino-5-carboxypentanoyl)-L-cysteinyl-D-valine synthase">
    <location>
        <begin position="1"/>
        <end position="3746"/>
    </location>
</feature>
<feature type="domain" description="Carrier 1" evidence="3">
    <location>
        <begin position="818"/>
        <end position="895"/>
    </location>
</feature>
<feature type="domain" description="Carrier 2" evidence="3">
    <location>
        <begin position="1902"/>
        <end position="1979"/>
    </location>
</feature>
<feature type="domain" description="Carrier 3" evidence="3">
    <location>
        <begin position="2991"/>
        <end position="3066"/>
    </location>
</feature>
<feature type="region of interest" description="Adenylation (A) domain 1" evidence="2 20">
    <location>
        <begin position="299"/>
        <end position="711"/>
    </location>
</feature>
<feature type="region of interest" description="Condensation (C) domain 1" evidence="2 27">
    <location>
        <begin position="918"/>
        <end position="1372"/>
    </location>
</feature>
<feature type="region of interest" description="Adenylation (A) domain 2" evidence="2 20">
    <location>
        <begin position="1391"/>
        <end position="1801"/>
    </location>
</feature>
<feature type="region of interest" description="Condensation (C) domain 2" evidence="2 27">
    <location>
        <begin position="1994"/>
        <end position="2434"/>
    </location>
</feature>
<feature type="region of interest" description="Adenylation (A) domain 3" evidence="2 20">
    <location>
        <begin position="2478"/>
        <end position="2883"/>
    </location>
</feature>
<feature type="region of interest" description="Epimerase (E) domain" evidence="2 13">
    <location>
        <begin position="3084"/>
        <end position="3500"/>
    </location>
</feature>
<feature type="region of interest" description="Thioesterase (TE) domain" evidence="2 13">
    <location>
        <begin position="3530"/>
        <end position="3732"/>
    </location>
</feature>
<feature type="modified residue" description="O-(pantetheine 4'-phosphoryl)serine" evidence="3">
    <location>
        <position position="855"/>
    </location>
</feature>
<feature type="modified residue" description="O-(pantetheine 4'-phosphoryl)serine" evidence="3">
    <location>
        <position position="1939"/>
    </location>
</feature>
<feature type="modified residue" description="O-(pantetheine 4'-phosphoryl)serine" evidence="3">
    <location>
        <position position="3026"/>
    </location>
</feature>
<feature type="mutagenesis site" description="Impairs epimerase activity and blocks tripeptide ACV production." evidence="13">
    <original>EGHGRE</original>
    <variation>LGFGLL</variation>
    <location>
        <begin position="3339"/>
        <end position="3344"/>
    </location>
</feature>
<feature type="mutagenesis site" description="Impairs tripeptide ACV production." evidence="13">
    <original>S</original>
    <variation>A</variation>
    <location>
        <position position="3599"/>
    </location>
</feature>
<protein>
    <recommendedName>
        <fullName evidence="24">N-(5-amino-5-carboxypentanoyl)-L-cysteinyl-D-valine synthase</fullName>
        <shortName evidence="24">ACV synthetase</shortName>
        <shortName evidence="24">ACVS</shortName>
        <ecNumber evidence="6 10 13 20 21">6.3.2.26</ecNumber>
    </recommendedName>
    <alternativeName>
        <fullName evidence="25">Delta-(L-alpha-aminoadipyl)-L-cysteinyl-D-valine synthetase</fullName>
    </alternativeName>
    <alternativeName>
        <fullName evidence="1">Nonribosomal peptide synthetase acvA</fullName>
    </alternativeName>
    <alternativeName>
        <fullName evidence="23">Penicillin biosynthetis cluster protein acvA</fullName>
    </alternativeName>
</protein>
<reference key="1">
    <citation type="journal article" date="2008" name="Nat. Biotechnol.">
        <title>Genome sequencing and analysis of the filamentous fungus Penicillium chrysogenum.</title>
        <authorList>
            <person name="van den Berg M.A."/>
            <person name="Albang R."/>
            <person name="Albermann K."/>
            <person name="Badger J.H."/>
            <person name="Daran J.-M."/>
            <person name="Driessen A.J.M."/>
            <person name="Garcia-Estrada C."/>
            <person name="Fedorova N.D."/>
            <person name="Harris D.M."/>
            <person name="Heijne W.H.M."/>
            <person name="Joardar V.S."/>
            <person name="Kiel J.A.K.W."/>
            <person name="Kovalchuk A."/>
            <person name="Martin J.F."/>
            <person name="Nierman W.C."/>
            <person name="Nijland J.G."/>
            <person name="Pronk J.T."/>
            <person name="Roubos J.A."/>
            <person name="van der Klei I.J."/>
            <person name="van Peij N.N.M.E."/>
            <person name="Veenhuis M."/>
            <person name="von Doehren H."/>
            <person name="Wagner C."/>
            <person name="Wortman J.R."/>
            <person name="Bovenberg R.A.L."/>
        </authorList>
    </citation>
    <scope>NUCLEOTIDE SEQUENCE [LARGE SCALE GENOMIC DNA]</scope>
    <source>
        <strain>ATCC 28089 / DSM 1075 / NRRL 1951 / Wisconsin 54-1255</strain>
    </source>
</reference>
<reference key="2">
    <citation type="journal article" date="1986" name="J. Bacteriol.">
        <title>Glucose represses formation of delta-(L-alpha-aminoadipyl)-L-cysteinyl-D-valine and isopenicillin N synthase but not penicillin acyltransferase in Penicillium chrysogenum.</title>
        <authorList>
            <person name="Revilla G."/>
            <person name="Ramos F.R."/>
            <person name="Lopez-Nieto M.J."/>
            <person name="Alvarez E."/>
            <person name="Martin J.F."/>
        </authorList>
    </citation>
    <scope>INDUCTION</scope>
</reference>
<reference key="3">
    <citation type="journal article" date="1990" name="Biotechnology (N.Y.)">
        <title>Cloning and heterologous expression of the penicillin biosynthetic gene cluster from penicillum chrysogenum.</title>
        <authorList>
            <person name="Smith D.J."/>
            <person name="Burnham M.K."/>
            <person name="Edwards J."/>
            <person name="Earl A.J."/>
            <person name="Turner G."/>
        </authorList>
    </citation>
    <scope>FUNCTION</scope>
    <scope>CATALYTIC ACTIVITY</scope>
    <scope>PATHWAY</scope>
</reference>
<reference key="4">
    <citation type="journal article" date="1990" name="FEBS Lett.">
        <title>Acyl coenzyme A: 6-aminopenicillanic acid acyltransferase from Penicillium chrysogenum and Aspergillus nidulans.</title>
        <authorList>
            <person name="Whiteman P.A."/>
            <person name="Abraham E.P."/>
            <person name="Baldwin J.E."/>
            <person name="Fleming M.D."/>
            <person name="Schofield C.J."/>
            <person name="Sutherland J.D."/>
            <person name="Willis A.C."/>
        </authorList>
    </citation>
    <scope>FUNCTION</scope>
</reference>
<reference key="5">
    <citation type="journal article" date="1990" name="J. Bacteriol.">
        <title>Molecular characterization of the acyl-coenzyme A:isopenicillin N acyltransferase gene (penDE) from Penicillium chrysogenum and Aspergillus nidulans and activity of recombinant enzyme in Escherichia coli.</title>
        <authorList>
            <person name="Tobin M.B."/>
            <person name="Fleming M.D."/>
            <person name="Skatrud P.L."/>
            <person name="Miller J.R."/>
        </authorList>
    </citation>
    <scope>FUNCTION</scope>
</reference>
<reference key="6">
    <citation type="journal article" date="1991" name="EMBO J.">
        <title>Localization of the pathway of the penicillin biosynthesis in Penicillium chrysogenum.</title>
        <authorList>
            <person name="Mueller W.H."/>
            <person name="van der Krift T.P."/>
            <person name="Krouwer A.J."/>
            <person name="Woesten H.A."/>
            <person name="van der Voort L.H."/>
            <person name="Smaal E.B."/>
            <person name="Verkleij A.J."/>
        </authorList>
    </citation>
    <scope>SUBCELLULAR LOCATION</scope>
</reference>
<reference key="7">
    <citation type="journal article" date="1992" name="J. Chem. Technol. Biotechnol.">
        <title>Oxygen utilisation by isopenicillin N synthase from Penicillium chrysogenum.</title>
        <authorList>
            <person name="Bainbridge Z.A."/>
            <person name="Scott R.I."/>
            <person name="Perry D."/>
        </authorList>
    </citation>
    <scope>FUNCTION</scope>
</reference>
<reference key="8">
    <citation type="journal article" date="1992" name="J. Med. Chem.">
        <title>Substrate specificity of isopenicillin N synthase.</title>
        <authorList>
            <person name="Huffman G.W."/>
            <person name="Gesellchen P.D."/>
            <person name="Turner J.R."/>
            <person name="Rothenberger R.B."/>
            <person name="Osborne H.E."/>
            <person name="Miller F.D."/>
            <person name="Chapman J.L."/>
            <person name="Queener S.W."/>
        </authorList>
    </citation>
    <scope>FUNCTION</scope>
</reference>
<reference key="9">
    <citation type="journal article" date="1993" name="J. Biol. Chem.">
        <title>Subcellular compartmentation of penicillin biosynthesis in Penicillium chrysogenum. The amino acid precursors are derived from the vacuole.</title>
        <authorList>
            <person name="Lendenfeld T."/>
            <person name="Ghali D."/>
            <person name="Wolschek M."/>
            <person name="Kubicek-Pranz E.M."/>
            <person name="Kubicek C.P."/>
        </authorList>
    </citation>
    <scope>SUBCELLULAR LOCATION</scope>
    <scope>FUNCTION</scope>
</reference>
<reference key="10">
    <citation type="journal article" date="1995" name="Curr. Genet.">
        <title>Nuclear DNA-binding proteins which recognize the intergenic control region of penicillin biosynthetic genes.</title>
        <authorList>
            <person name="Feng B."/>
            <person name="Friedlin E."/>
            <person name="Marzluf G.A."/>
        </authorList>
    </citation>
    <scope>INDUCTION</scope>
</reference>
<reference key="11">
    <citation type="journal article" date="1997" name="Biochem. Biophys. Res. Commun.">
        <title>ACV synthetase: expression of amino acid activating domains of the Penicillium chrysogenum enzyme in Aspergillus nidulans.</title>
        <authorList>
            <person name="Etchegaray A."/>
            <person name="Dieckmann R."/>
            <person name="Kennedy J."/>
            <person name="Turner G."/>
            <person name="von Doehren H."/>
        </authorList>
    </citation>
    <scope>FUNCTION</scope>
    <scope>DOMAIN</scope>
    <scope>CATALYTIC ACTIVITY</scope>
    <scope>PATHWAY</scope>
</reference>
<reference key="12">
    <citation type="journal article" date="1997" name="Biochem. J.">
        <title>Purification and characterization of delta-(L-alpha-aminoadipyl)-L-cysteinyl-D-valine synthetase from Penicillium chrysogenum.</title>
        <authorList>
            <person name="Theilgaard H.B."/>
            <person name="Kristiansen K.N."/>
            <person name="Henriksen C.M."/>
            <person name="Nielsen J."/>
        </authorList>
    </citation>
    <scope>FUNCTION</scope>
    <scope>CATALYTIC ACTIVITY</scope>
    <scope>BIOPHYSICOCHEMICAL PROPERTIES</scope>
    <scope>COFACTOR</scope>
    <scope>PATHWAY</scope>
</reference>
<reference key="13">
    <citation type="journal article" date="2000" name="J. Biol. Chem.">
        <title>A novel heptameric sequence (TTAGTAA) is the binding site for a protein required for high level expression of pcbAB, the first gene of the penicillin biosynthesis in Penicillium chrysogenum.</title>
        <authorList>
            <person name="Kosalkova K."/>
            <person name="Marcos A.T."/>
            <person name="Fierro F."/>
            <person name="Hernando-Rico V."/>
            <person name="Gutierrez S."/>
            <person name="Martin J.F."/>
        </authorList>
    </citation>
    <scope>INDUCTION</scope>
</reference>
<reference key="14">
    <citation type="journal article" date="2002" name="Fungal Genet. Biol.">
        <title>delta-(L-alpha-Aminoadipyl)-L-cysteinyl-D-valine synthetase, that mediates the first committed step in penicillin biosynthesis, is a cytosolic enzyme.</title>
        <authorList>
            <person name="van der Lende T.R."/>
            <person name="van de Kamp M."/>
            <person name="Berg M."/>
            <person name="Sjollema K."/>
            <person name="Bovenberg R.A."/>
            <person name="Veenhuis M."/>
            <person name="Konings W.N."/>
            <person name="Driessen A.J."/>
        </authorList>
    </citation>
    <scope>SUBCELLULAR LOCATION</scope>
</reference>
<reference key="15">
    <citation type="journal article" date="2009" name="Metab. Eng.">
        <title>Heterologous production of non-ribosomal peptide LLD-ACV in Saccharomyces cerevisiae.</title>
        <authorList>
            <person name="Siewers V."/>
            <person name="Chen X."/>
            <person name="Huang L."/>
            <person name="Zhang J."/>
            <person name="Nielsen J."/>
        </authorList>
    </citation>
    <scope>FUNCTION</scope>
    <scope>CATALYTIC ACTIVITY</scope>
    <scope>PATHWAY</scope>
</reference>
<reference key="16">
    <citation type="journal article" date="2012" name="Biochimie">
        <title>Motifs in the C-terminal region of the Penicillium chrysogenum ACV synthetase are essential for valine epimerization and processivity of tripeptide formation.</title>
        <authorList>
            <person name="Wu X."/>
            <person name="Garcia-Estrada C."/>
            <person name="Vaca I."/>
            <person name="Martin J.F."/>
        </authorList>
    </citation>
    <scope>FUNCTION</scope>
    <scope>DOMAIN</scope>
    <scope>CATALYTIC ACTIVITY</scope>
    <scope>MUTAGENESIS OF 3339-GLU--GLU-3344 AND SER-3599</scope>
    <scope>PATHWAY</scope>
</reference>
<reference key="17">
    <citation type="journal article" date="2012" name="Fungal Genet. Biol.">
        <title>The regulatory factor PcRFX1 controls the expression of the three genes of beta-lactam biosynthesis in Penicillium chrysogenum.</title>
        <authorList>
            <person name="Dominguez-Santos R."/>
            <person name="Martin J.F."/>
            <person name="Kosalkova K."/>
            <person name="Prieto C."/>
            <person name="Ullan R.V."/>
            <person name="Garcia-Estrada C."/>
        </authorList>
    </citation>
    <scope>INDUCTION</scope>
</reference>
<reference key="18">
    <citation type="journal article" date="2013" name="Appl. Microbiol. Biotechnol.">
        <title>A vacuolar membrane protein affects drastically the biosynthesis of the ACV tripeptide and the beta-lactam pathway of Penicillium chrysogenum.</title>
        <authorList>
            <person name="Fernandez-Aguado M."/>
            <person name="Teijeira F."/>
            <person name="Martin J.F."/>
            <person name="Ullan R.V."/>
        </authorList>
    </citation>
    <scope>FUNCTION</scope>
</reference>
<reference key="19">
    <citation type="journal article" date="2013" name="Appl. Microbiol. Biotechnol.">
        <title>The transport of phenylacetic acid across the peroxisomal membrane is mediated by the PaaT protein in Penicillium chrysogenum.</title>
        <authorList>
            <person name="Fernandez-Aguado M."/>
            <person name="Ullan R.V."/>
            <person name="Teijeira F."/>
            <person name="Rodriguez-Castro R."/>
            <person name="Martin J.F."/>
        </authorList>
    </citation>
    <scope>FUNCTION</scope>
</reference>
<reference key="20">
    <citation type="journal article" date="2014" name="Metab. Eng.">
        <title>New insights into the isopenicillin N transport in Penicillium chrysogenum.</title>
        <authorList>
            <person name="Fernandez-Aguado M."/>
            <person name="Martin J.F."/>
            <person name="Rodriguez-Castro R."/>
            <person name="Garcia-Estrada C."/>
            <person name="Albillos S.M."/>
            <person name="Teijeira F."/>
            <person name="Ullan R.V."/>
        </authorList>
    </citation>
    <scope>FUNCTION</scope>
</reference>
<organism>
    <name type="scientific">Penicillium rubens (strain ATCC 28089 / DSM 1075 / NRRL 1951 / Wisconsin 54-1255)</name>
    <name type="common">Penicillium chrysogenum</name>
    <dbReference type="NCBI Taxonomy" id="500485"/>
    <lineage>
        <taxon>Eukaryota</taxon>
        <taxon>Fungi</taxon>
        <taxon>Dikarya</taxon>
        <taxon>Ascomycota</taxon>
        <taxon>Pezizomycotina</taxon>
        <taxon>Eurotiomycetes</taxon>
        <taxon>Eurotiomycetidae</taxon>
        <taxon>Eurotiales</taxon>
        <taxon>Aspergillaceae</taxon>
        <taxon>Penicillium</taxon>
        <taxon>Penicillium chrysogenum species complex</taxon>
    </lineage>
</organism>
<comment type="function">
    <text evidence="6 7 8 10 11 12 13 14 16 19 20 21">Nonribosomal peptide synthetase; part of the gene cluster that mediates the biosynthesis of penicillin, the world's most important antibiotic (PubMed:1368505, PubMed:21889568, PubMed:9266851). The first step of the pathway is performed by the trimodular NRPS acvA that produces the tripeptide N-[(5S)-5-amino-5-carboxypentanoyl]-L-cysteinyl-D-valine (LLD-ACV or ACV) via condensation of the 3 residues L-2-aminoadipate, L-cysteine and L-valine (PubMed:19686863, PubMed:21889568, PubMed:9266851, PubMed:9355751). The precursor amino acids for penicillin biosynthesis are withdrawn from the vacuolar amino acid pool by the MFS-type transporter penV (PubMed:22777282, PubMed:8416970). Each of the constituent amino acids of the tripeptide ACV are activated as aminoacyl-adenylates with peptide bonds formed through the participation of amino acid thioester intermediates (PubMed:21889568, PubMed:9266851). The tripeptide ACV is then cyclized to form isopenicillin N (IPN) by the isopenicillin N synthase ipnA that forms the beta-lactam nucleus (PubMed:1368505, PubMed:1369045, PubMed:1588566). Finally, the alpha-aminoadipyl side chain is exchanged for phenylacetic acid by the isopenicillin N acyltransferase aatA to yield penicillin (PubMed:1368505, PubMed:2110531, PubMed:2120195). This step occurs in the peroxisomal matrix and the penM and paaT transporters are involved in the isopenicillin N and phenylacetic acid import into the peroxisome, respectively (PubMed:23053082).</text>
</comment>
<comment type="catalytic activity">
    <reaction evidence="6 10 13 20 21">
        <text>L-2-aminoadipate + L-valine + L-cysteine + 3 ATP + H2O = N-[(5S)-5-amino-5-carboxypentanoyl]-L-cysteinyl-D-valine + 3 AMP + 3 diphosphate + 3 H(+)</text>
        <dbReference type="Rhea" id="RHEA:23196"/>
        <dbReference type="ChEBI" id="CHEBI:15377"/>
        <dbReference type="ChEBI" id="CHEBI:15378"/>
        <dbReference type="ChEBI" id="CHEBI:30616"/>
        <dbReference type="ChEBI" id="CHEBI:33019"/>
        <dbReference type="ChEBI" id="CHEBI:35235"/>
        <dbReference type="ChEBI" id="CHEBI:57762"/>
        <dbReference type="ChEBI" id="CHEBI:58572"/>
        <dbReference type="ChEBI" id="CHEBI:58672"/>
        <dbReference type="ChEBI" id="CHEBI:456215"/>
        <dbReference type="EC" id="6.3.2.26"/>
    </reaction>
    <physiologicalReaction direction="left-to-right" evidence="6 10 13 20 21">
        <dbReference type="Rhea" id="RHEA:23197"/>
    </physiologicalReaction>
</comment>
<comment type="cofactor">
    <cofactor>
        <name>pantetheine 4'-phosphate</name>
        <dbReference type="ChEBI" id="CHEBI:47942"/>
    </cofactor>
    <text evidence="2">Binds 3 phosphopantetheines covalently.</text>
</comment>
<comment type="cofactor">
    <cofactor evidence="21">
        <name>Mg(2+)</name>
        <dbReference type="ChEBI" id="CHEBI:18420"/>
    </cofactor>
</comment>
<comment type="biophysicochemical properties">
    <kinetics>
        <KM evidence="21">46 uM for L-2-aminoadipate</KM>
        <KM evidence="21">80 uM for L-cysteine</KM>
        <KM evidence="21">83 uM for L-valine</KM>
    </kinetics>
    <phDependence>
        <text evidence="21">Optimum pH is 8.4.</text>
    </phDependence>
</comment>
<comment type="pathway">
    <text evidence="6 10 13 20 21">Antibiotic biosynthesis; penicillin G biosynthesis; penicillin G from L-alpha-aminoadipate and L-cysteine and L-valine: step 1/3.</text>
</comment>
<comment type="subcellular location">
    <subcellularLocation>
        <location evidence="5">Cytoplasm</location>
        <location evidence="5">Cytosol</location>
    </subcellularLocation>
    <subcellularLocation>
        <location evidence="9 19">Vacuole membrane</location>
        <topology evidence="19">Peripheral membrane protein</topology>
    </subcellularLocation>
    <text evidence="19">Loosely attached to the vacuoles.</text>
</comment>
<comment type="induction">
    <text evidence="4 15 17 18">Expression is repressed by glucose (PubMed:3096965). The transcription factor rfx1 controls penicillin biosynthesis through the regulation of the acvA, ipnA and aatA transcription (PubMed:22960281). The promoter heptameric sequence 5'-TTAGTAA-3' is the binding site for the transcriptional activator named penicillin transcriptional activator 1 (PTA1) (PubMed:10644695). Multiple additional DNA-binding proteins appear to bind to the promoter, including the nuclear factor A (NF-A) that recognizes an the 5'-GCCAAGCC-3' sequence or the global-acting nitrogen regulatory protein NIT2 that binds strongly at a single site that contains two closely spaced GATA sequences (PubMed:7614558).</text>
</comment>
<comment type="domain">
    <text evidence="13 20">NRP synthetases are composed of discrete domains (adenylation (A), thiolation (T) or peptidyl carrier protein (PCP) and condensation (C) domains) which when grouped together are referred to as a single module. Each module is responsible for the recognition (via the A domain) and incorporation of a single amino acid into the growing peptide product. Thus, an NRP synthetase is generally composed of one or more modules and can terminate in a thioesterase domain (TE) that releases the newly synthesized peptide from the enzyme. Occasionally, epimerase (E) domains (responsible for L- to D-amino acid conversion) are present within the NRP synthetase. GliP has the following architecture: A-T-C-A-T-C-A-T-E-TE.</text>
</comment>
<comment type="similarity">
    <text evidence="26">Belongs to the NRP synthetase family.</text>
</comment>
<comment type="sequence caution" evidence="26">
    <conflict type="miscellaneous discrepancy">
        <sequence resource="EMBL-CDS" id="CAP97036"/>
    </conflict>
    <text>Due to a sequencing error it is not possible to predict the open reading frame from the submitted sequence.</text>
</comment>
<dbReference type="EC" id="6.3.2.26" evidence="6 10 13 20 21"/>
<dbReference type="EMBL" id="AM920436">
    <property type="protein sequence ID" value="CAP97036.1"/>
    <property type="status" value="ALT_SEQ"/>
    <property type="molecule type" value="Genomic_DNA"/>
</dbReference>
<dbReference type="RefSeq" id="XP_002569114.1">
    <property type="nucleotide sequence ID" value="XM_002569068.1"/>
</dbReference>
<dbReference type="SMR" id="B6HLU1"/>
<dbReference type="STRING" id="500485.B6HLU1"/>
<dbReference type="KEGG" id="pcs:N7525_006404"/>
<dbReference type="HOGENOM" id="CLU_000022_0_0_1"/>
<dbReference type="OrthoDB" id="4369008at2759"/>
<dbReference type="BRENDA" id="6.3.2.26">
    <property type="organism ID" value="4606"/>
</dbReference>
<dbReference type="UniPathway" id="UPA00149">
    <property type="reaction ID" value="UER00239"/>
</dbReference>
<dbReference type="Proteomes" id="UP000000724">
    <property type="component" value="Contig Pc00c21"/>
</dbReference>
<dbReference type="GO" id="GO:0005829">
    <property type="term" value="C:cytosol"/>
    <property type="evidence" value="ECO:0007669"/>
    <property type="project" value="UniProtKB-SubCell"/>
</dbReference>
<dbReference type="GO" id="GO:0005774">
    <property type="term" value="C:vacuolar membrane"/>
    <property type="evidence" value="ECO:0007669"/>
    <property type="project" value="UniProtKB-SubCell"/>
</dbReference>
<dbReference type="GO" id="GO:0005524">
    <property type="term" value="F:ATP binding"/>
    <property type="evidence" value="ECO:0007669"/>
    <property type="project" value="UniProtKB-KW"/>
</dbReference>
<dbReference type="GO" id="GO:0016874">
    <property type="term" value="F:ligase activity"/>
    <property type="evidence" value="ECO:0007669"/>
    <property type="project" value="UniProtKB-KW"/>
</dbReference>
<dbReference type="GO" id="GO:0031177">
    <property type="term" value="F:phosphopantetheine binding"/>
    <property type="evidence" value="ECO:0007669"/>
    <property type="project" value="InterPro"/>
</dbReference>
<dbReference type="GO" id="GO:0043041">
    <property type="term" value="P:amino acid activation for nonribosomal peptide biosynthetic process"/>
    <property type="evidence" value="ECO:0007669"/>
    <property type="project" value="TreeGrafter"/>
</dbReference>
<dbReference type="GO" id="GO:0042318">
    <property type="term" value="P:penicillin biosynthetic process"/>
    <property type="evidence" value="ECO:0000314"/>
    <property type="project" value="GO_Central"/>
</dbReference>
<dbReference type="CDD" id="cd17648">
    <property type="entry name" value="A_NRPS_ACVS-like"/>
    <property type="match status" value="1"/>
</dbReference>
<dbReference type="CDD" id="cd19534">
    <property type="entry name" value="E_NRPS"/>
    <property type="match status" value="1"/>
</dbReference>
<dbReference type="CDD" id="cd19539">
    <property type="entry name" value="SgcC5_NRPS-like"/>
    <property type="match status" value="1"/>
</dbReference>
<dbReference type="FunFam" id="3.30.559.30:FF:000069">
    <property type="entry name" value="N-(5-amino-5-carboxypentanoyl)-L-cysteinyl-D-valine synthase"/>
    <property type="match status" value="1"/>
</dbReference>
<dbReference type="FunFam" id="1.10.1200.10:FF:000016">
    <property type="entry name" value="Non-ribosomal peptide synthase"/>
    <property type="match status" value="1"/>
</dbReference>
<dbReference type="FunFam" id="3.40.50.980:FF:000001">
    <property type="entry name" value="Non-ribosomal peptide synthetase"/>
    <property type="match status" value="3"/>
</dbReference>
<dbReference type="FunFam" id="1.10.1200.10:FF:000005">
    <property type="entry name" value="Nonribosomal peptide synthetase 1"/>
    <property type="match status" value="1"/>
</dbReference>
<dbReference type="Gene3D" id="3.30.300.30">
    <property type="match status" value="3"/>
</dbReference>
<dbReference type="Gene3D" id="3.40.50.980">
    <property type="match status" value="4"/>
</dbReference>
<dbReference type="Gene3D" id="1.10.1200.10">
    <property type="entry name" value="ACP-like"/>
    <property type="match status" value="3"/>
</dbReference>
<dbReference type="Gene3D" id="3.40.50.1820">
    <property type="entry name" value="alpha/beta hydrolase"/>
    <property type="match status" value="1"/>
</dbReference>
<dbReference type="Gene3D" id="3.30.559.10">
    <property type="entry name" value="Chloramphenicol acetyltransferase-like domain"/>
    <property type="match status" value="3"/>
</dbReference>
<dbReference type="Gene3D" id="2.30.38.10">
    <property type="entry name" value="Luciferase, Domain 3"/>
    <property type="match status" value="2"/>
</dbReference>
<dbReference type="Gene3D" id="3.40.50.12780">
    <property type="entry name" value="N-terminal domain of ligase-like"/>
    <property type="match status" value="1"/>
</dbReference>
<dbReference type="Gene3D" id="3.30.559.30">
    <property type="entry name" value="Nonribosomal peptide synthetase, condensation domain"/>
    <property type="match status" value="4"/>
</dbReference>
<dbReference type="InterPro" id="IPR010071">
    <property type="entry name" value="AA_adenyl_dom"/>
</dbReference>
<dbReference type="InterPro" id="IPR029058">
    <property type="entry name" value="AB_hydrolase_fold"/>
</dbReference>
<dbReference type="InterPro" id="IPR036736">
    <property type="entry name" value="ACP-like_sf"/>
</dbReference>
<dbReference type="InterPro" id="IPR025110">
    <property type="entry name" value="AMP-bd_C"/>
</dbReference>
<dbReference type="InterPro" id="IPR045851">
    <property type="entry name" value="AMP-bd_C_sf"/>
</dbReference>
<dbReference type="InterPro" id="IPR020845">
    <property type="entry name" value="AMP-binding_CS"/>
</dbReference>
<dbReference type="InterPro" id="IPR000873">
    <property type="entry name" value="AMP-dep_synth/lig_dom"/>
</dbReference>
<dbReference type="InterPro" id="IPR042099">
    <property type="entry name" value="ANL_N_sf"/>
</dbReference>
<dbReference type="InterPro" id="IPR023213">
    <property type="entry name" value="CAT-like_dom_sf"/>
</dbReference>
<dbReference type="InterPro" id="IPR001242">
    <property type="entry name" value="Condensatn"/>
</dbReference>
<dbReference type="InterPro" id="IPR020806">
    <property type="entry name" value="PKS_PP-bd"/>
</dbReference>
<dbReference type="InterPro" id="IPR009081">
    <property type="entry name" value="PP-bd_ACP"/>
</dbReference>
<dbReference type="InterPro" id="IPR006162">
    <property type="entry name" value="Ppantetheine_attach_site"/>
</dbReference>
<dbReference type="InterPro" id="IPR001031">
    <property type="entry name" value="Thioesterase"/>
</dbReference>
<dbReference type="NCBIfam" id="TIGR01733">
    <property type="entry name" value="AA-adenyl-dom"/>
    <property type="match status" value="3"/>
</dbReference>
<dbReference type="NCBIfam" id="NF003417">
    <property type="entry name" value="PRK04813.1"/>
    <property type="match status" value="3"/>
</dbReference>
<dbReference type="PANTHER" id="PTHR45527:SF1">
    <property type="entry name" value="FATTY ACID SYNTHASE"/>
    <property type="match status" value="1"/>
</dbReference>
<dbReference type="PANTHER" id="PTHR45527">
    <property type="entry name" value="NONRIBOSOMAL PEPTIDE SYNTHETASE"/>
    <property type="match status" value="1"/>
</dbReference>
<dbReference type="Pfam" id="PF00501">
    <property type="entry name" value="AMP-binding"/>
    <property type="match status" value="3"/>
</dbReference>
<dbReference type="Pfam" id="PF13193">
    <property type="entry name" value="AMP-binding_C"/>
    <property type="match status" value="2"/>
</dbReference>
<dbReference type="Pfam" id="PF00668">
    <property type="entry name" value="Condensation"/>
    <property type="match status" value="3"/>
</dbReference>
<dbReference type="Pfam" id="PF00550">
    <property type="entry name" value="PP-binding"/>
    <property type="match status" value="3"/>
</dbReference>
<dbReference type="Pfam" id="PF00975">
    <property type="entry name" value="Thioesterase"/>
    <property type="match status" value="1"/>
</dbReference>
<dbReference type="SMART" id="SM00823">
    <property type="entry name" value="PKS_PP"/>
    <property type="match status" value="3"/>
</dbReference>
<dbReference type="SUPFAM" id="SSF56801">
    <property type="entry name" value="Acetyl-CoA synthetase-like"/>
    <property type="match status" value="3"/>
</dbReference>
<dbReference type="SUPFAM" id="SSF47336">
    <property type="entry name" value="ACP-like"/>
    <property type="match status" value="3"/>
</dbReference>
<dbReference type="SUPFAM" id="SSF53474">
    <property type="entry name" value="alpha/beta-Hydrolases"/>
    <property type="match status" value="1"/>
</dbReference>
<dbReference type="SUPFAM" id="SSF52777">
    <property type="entry name" value="CoA-dependent acyltransferases"/>
    <property type="match status" value="7"/>
</dbReference>
<dbReference type="PROSITE" id="PS00455">
    <property type="entry name" value="AMP_BINDING"/>
    <property type="match status" value="3"/>
</dbReference>
<dbReference type="PROSITE" id="PS50075">
    <property type="entry name" value="CARRIER"/>
    <property type="match status" value="3"/>
</dbReference>
<dbReference type="PROSITE" id="PS00012">
    <property type="entry name" value="PHOSPHOPANTETHEINE"/>
    <property type="match status" value="3"/>
</dbReference>
<sequence>MGPSNPAMAYFKPSTRDTMDPCSGNAADGSIRVRFRGGIERWKECVNQVPERCDLSGLTTDSTRYQLASTGFGDASAAYQERLMTVPVDVHAALQELCLERRVSVGSVINFSVHQMLKGFGNGTHTITASLHREQNLQNSSPSWVVSPTIVTHENRDGWSVAQAVESIEAGRGSEKESVTAIDSGSSLVKMGLFDLLVSFVDADDARIPCFDFPLAVIVRECDANLSLTLRFSDCLFNEETICNFTDALNILLAEAVIGRVTPVADIELLSAEQKQQLEEWNNTDGEYPSSKRLHHLIEEVVERHEDKIAVVCDERELTYGELNAQGNSLARYLRSIGILPEQLVALFLDKSEKLIVTILGVWKSGAAYVPIDPTYPDERVRFVLDDTKARAIIASNQHVERLQREVIGDRNLCIIRLEPLLASLAQDSSKFPAHNLDDLPLTSQQLAYVTYTSGTTGFPKGIFKQHTNVVNSITDLSARYGVAGQHHEAILLFSACVFEPFVRQTLMALVNGHLLAVINDVEKYDADTLLPFIRRHSITYLNGTASVLQEYDFSDCPSLNRIILVGENLTEARYLALRQRFKNRILNEYGFTESAFVTALKIFDPESTRKDTSLGRPVRNVKCYILNPSLKRVPIGATGELHIGGLGISKGYLNRPELTPHRFIPNPFQTDCEKQLGINSLMYKTGDLARWLPNGEVEYLGRADFQIKLRGIRIEPGEIETMLAMYPRVRTSLVVSKKLRNGPEETTNEHLVGYYVCDSASVSEADLLSFLEKKLPRYMIPTRLVQLSQIPVNVNGKADLRALPAVDISNSTEVRSDLRGDTEIALGEIWADVLGARQRSVSRNDNFFRLGGHSITCIQLIARIRQRLSVSISVEDVFATRTLERMADLLQNKQQEKCDKPHEAPTELLEENAATDNIYLANSLQQGFVYHYLKSMEQSDAYVMQSVLRYNTTLSPDLFQRAWKHAQQSFPALRLRFSWEKEVFQLLDQDPPLDWRFLYFTDVAAGAVEDRKLEDLRRQDLTERFKLDVGRLFRVYLIKHSENRFTCLFSCHHAILDGWSLPLLFEKVHETYLQLLHGDNLTSSMDDPYTRTQRYLHAHREDHLDFWAGVVQKINERCDMNALLNERSRYKVQLADYDQVQEQRQLTIALSGDAWLADLRQTCSAQGITLHSILQFVWHAVLHAYGGGTHTITGTTISGRNLPILGIERAVGPYINTLPLVLDHSTFKDKTIMEAIEDVQAKVNVMNSRGNVELGRLHKTDLKHGLFDSLFVLENYPNLDKSRTLEHQTELGYSIEGGTEKLNYPLAVIAREVETTGGFTVSICYASELFEEVMISELLHMVQDTLMQVARGLNEPVGSLEYLSSIQLEQLAAWNATEAEFPDTTLHEMFENEASQKPDKIAVVYEETSLTYRELNERANRMAHQLRSDVSPNPNEVIALVMDKSEHMIVNILAVWKSGGAYVPIDPGYPNDRIQYILEDTQALAVIADSCYLPRIKGMAASGTLLYPSVLPANPDSKWSVSNPSPLSRSTDLAYIIYTSGTTGRPKGVTVEHHGVVNLQVSLSKVFGLRDTDDEVILSFSNYVFDHFVEQMTDAILNGQTLLVLNDGMRGDKERLYRYIEKNRVTYLSGTPSVVSMYEFSRFKDHLRRVDCVGEAFSEPVFDKIRETFHGLVINGYGPTEVSITTHKRLYPFPERRMDKSIGQQVHNSTSYVLNEDMKRTPIGSVGELYLGGEGVVRGYHNRADVTAERFIPNPFQSEEDKREGRNSRLYKTGDLVRWIPGSSGEVEYLGRNDFQVKIRGLRIELGEIEAILSSYHGIKQSVVIAKDCREGAQKFLVGYYVADAALPSAAIRRFMQSRLPGYMVPSRLILVSKFPVTPSGKLDTKALPPAEEESEIDVVPPRSEIERSLCDIWAELLEMHPEEIGIYSDFFSLGGDSLKSTKLSFMIHESFNRAVSVSALFCHRTVEAQTHLILNDAADVHEITPIDCNDTQMIPVSRAQERLLFIHEFENGSNAYNIDAAFELPGSVDASLLEQALRGNLARHEALRTLLVKDHATGIYLQKVLSPDEAQGMFSVNVDTAKQVERLDQEIASLSQHVFRLDDELPWEARILKLESGGLYLILAFHHTCFDAWSLKVFEQELRALYAALQKTKSAANLPALKAQYKEYALYHRRQLSGDRMRNLSDFWLRKLIGLEPLQLITDRPRPVQFKYDGDDLSIELSKKETENLRGVAKRCKSSLYVVLVSVYCVMLASYANQSDVSVGIPVSHRTHPQFQSVIGFFVNLVVLRVDISQSAICGLIRRVMKELVDAQLHQDMPFQEVTKLLQVDNDPSRHPLVQNVFNFESRANGEHDARSEDEGSLAFNQYRPVQPVDSVAKFDLNATVTELESGLRVNFNYATSLFNKSTIQGFLHTYEYLLRQLSELSAEGINEDTQLSLVRPTENGDLHLPLAQSPLATTAEEQKVASLNQAFEREAFLAAEKIAVVQGDRALSYADLNGQANQLARYIQSVSCIGADDGIALMLEKSIDTIICILAIWKAGAAYVPLDPTYPPGRVQLILEEIKAKAVLVHSSHASKCERHGAKVIAVDSPAIETAVSQQSAADLPTIASLGNLAYIIFTSGTSGKPKGVLVEQKAVLLLRDALRERYFGRDCTKHHGVLFLSNYVFDFSVEQLVLSVLSGHKLIVPPAEFVADDEFYRMASTHGLSYLSGTPSLLQKIDLARLDHLQVVTAAGEELHATQYEKMRRRFNGPIYNAYGVTETTVYNIIAEFTTNSIFENALREVLPGTRAYVLNAALQPVPFDAVGELYLAGDSVTRGYLNQPLLTDQRFIPNPFCKEEDIAMGRFARLYKTGDLVRSRFNRQQQPQLEYLGRGDLQIKMRGYRIEISEVQNVLTSSPGVREGAVVAKYENNDTYSRTAHSLVGYYTTDNETVSEADILTFMKARLPTYMVPSHLCCLEGALPVTINGKLDVRRLPEIINDSAQSSYSPPRNIIEAKMCRLWESALGMERCGIDDDLFKLGGDSITSLHLVAQIHNQVGCKITVRDIFEHRTARALHDHVFMKDSDRSNVTQFRTEQGPVIGEAPLLPIQDWFLSKALQHPMYWNHTFYVRTPELDVDSLSAAVRDLQQYHDVFRMRLKREEVGFVQSFAEDFSPAQLRVLNVKDVDGSAAVNEILDGWQSGFNLENGPIGSIGYLHGYEDRSARVWFSVHHMAIDTVSWQILVRDLQTLYRNGSLGSKGSSFRQWAEAIQNYKASDSERNHWNKLVMETASSISALPTSTGSRVRLSRSLSPEKTASLIQGGIDRQDVSVYDSLLTSVGLALQHIAPTGPSMVTIEGHGREEVDQTLDVSRTMGWFTTMYPFEIPRLSTENIVQGVVAVSERFRQVPARGVGYGTLYGYTQHPLPQVTVNYLGQLARKQSKPKEWVLAVGDNEFEYGLMTSPEDKDRSSSAVDVTAVCIDGTMIIDVDSAWSLEESEQFISSIEEGLNKILDGRASQQTSRFPDVPQPAETYTPYFEYLEPPRQGPTLFLLPPGEGGAESYFNNIVKRLRQTNMVVFNNYYLHSKRLRTFEELAEMYLDQVRGIQPHGPYHFIGWSFGGILAMEMSRRLVASDEKIGFLGIIDTYFNVRGATRTIGLGDTEILDPIHHIYNPDPANFQRLPSATDRIVLFKAMRPNNKYESENQRRLYEYYDGTRLNGLDSLLPSDSDVQLVPLTDDTHFSWVGNPQQVEQMCATIKEHLARY</sequence>
<keyword id="KW-0045">Antibiotic biosynthesis</keyword>
<keyword id="KW-0067">ATP-binding</keyword>
<keyword id="KW-0963">Cytoplasm</keyword>
<keyword id="KW-0436">Ligase</keyword>
<keyword id="KW-0472">Membrane</keyword>
<keyword id="KW-0511">Multifunctional enzyme</keyword>
<keyword id="KW-0547">Nucleotide-binding</keyword>
<keyword id="KW-0596">Phosphopantetheine</keyword>
<keyword id="KW-0597">Phosphoprotein</keyword>
<keyword id="KW-1185">Reference proteome</keyword>
<keyword id="KW-0677">Repeat</keyword>
<keyword id="KW-0926">Vacuole</keyword>
<evidence type="ECO:0000250" key="1">
    <source>
        <dbReference type="UniProtKB" id="P19787"/>
    </source>
</evidence>
<evidence type="ECO:0000255" key="2"/>
<evidence type="ECO:0000255" key="3">
    <source>
        <dbReference type="PROSITE-ProRule" id="PRU00258"/>
    </source>
</evidence>
<evidence type="ECO:0000269" key="4">
    <source>
    </source>
</evidence>
<evidence type="ECO:0000269" key="5">
    <source>
    </source>
</evidence>
<evidence type="ECO:0000269" key="6">
    <source>
    </source>
</evidence>
<evidence type="ECO:0000269" key="7">
    <source>
    </source>
</evidence>
<evidence type="ECO:0000269" key="8">
    <source>
    </source>
</evidence>
<evidence type="ECO:0000269" key="9">
    <source>
    </source>
</evidence>
<evidence type="ECO:0000269" key="10">
    <source>
    </source>
</evidence>
<evidence type="ECO:0000269" key="11">
    <source>
    </source>
</evidence>
<evidence type="ECO:0000269" key="12">
    <source>
    </source>
</evidence>
<evidence type="ECO:0000269" key="13">
    <source>
    </source>
</evidence>
<evidence type="ECO:0000269" key="14">
    <source>
    </source>
</evidence>
<evidence type="ECO:0000269" key="15">
    <source>
    </source>
</evidence>
<evidence type="ECO:0000269" key="16">
    <source>
    </source>
</evidence>
<evidence type="ECO:0000269" key="17">
    <source>
    </source>
</evidence>
<evidence type="ECO:0000269" key="18">
    <source>
    </source>
</evidence>
<evidence type="ECO:0000269" key="19">
    <source>
    </source>
</evidence>
<evidence type="ECO:0000269" key="20">
    <source>
    </source>
</evidence>
<evidence type="ECO:0000269" key="21">
    <source>
    </source>
</evidence>
<evidence type="ECO:0000303" key="22">
    <source>
    </source>
</evidence>
<evidence type="ECO:0000303" key="23">
    <source>
    </source>
</evidence>
<evidence type="ECO:0000303" key="24">
    <source>
    </source>
</evidence>
<evidence type="ECO:0000303" key="25">
    <source>
    </source>
</evidence>
<evidence type="ECO:0000305" key="26"/>
<evidence type="ECO:0000305" key="27">
    <source>
    </source>
</evidence>
<accession>B6HLU1</accession>
<gene>
    <name evidence="1" type="primary">acvA</name>
    <name evidence="22" type="synonym">pcbAB</name>
    <name type="ORF">PCH_Pc21g21390</name>
</gene>
<name>ACVA_PENRW</name>